<name>EFHD2_RAT</name>
<sequence length="239" mass="26759">MATDELASKLSRRLQMEDEGGEATEQPGLNGAAAAAAEAPDETAQALGSADDELSAKLLRRADLNQGIGEPQSPSRRVFNPYTEFKEFSRKQIKDMEKMFKQYDAGKDGFIDLMELKLMMEKLGAPQTHLGLKSMIQEVDEDFDSKLSFREFLLIFRKAAAGELQEDSGLHVLARLSEIDVSTEGVKGAKNFFEAKVQAINVSSRFEEEIKAEQEERKKQAEEVKQRKAAFKELQSTFK</sequence>
<keyword id="KW-0007">Acetylation</keyword>
<keyword id="KW-0106">Calcium</keyword>
<keyword id="KW-0903">Direct protein sequencing</keyword>
<keyword id="KW-0472">Membrane</keyword>
<keyword id="KW-0479">Metal-binding</keyword>
<keyword id="KW-0597">Phosphoprotein</keyword>
<keyword id="KW-1185">Reference proteome</keyword>
<keyword id="KW-0677">Repeat</keyword>
<dbReference type="EMBL" id="BC098936">
    <property type="protein sequence ID" value="AAH98936.1"/>
    <property type="molecule type" value="mRNA"/>
</dbReference>
<dbReference type="RefSeq" id="NP_001026818.1">
    <property type="nucleotide sequence ID" value="NM_001031648.1"/>
</dbReference>
<dbReference type="SMR" id="Q4FZY0"/>
<dbReference type="BioGRID" id="255962">
    <property type="interactions" value="4"/>
</dbReference>
<dbReference type="FunCoup" id="Q4FZY0">
    <property type="interactions" value="1040"/>
</dbReference>
<dbReference type="IntAct" id="Q4FZY0">
    <property type="interactions" value="2"/>
</dbReference>
<dbReference type="STRING" id="10116.ENSRNOP00000018864"/>
<dbReference type="iPTMnet" id="Q4FZY0"/>
<dbReference type="PhosphoSitePlus" id="Q4FZY0"/>
<dbReference type="jPOST" id="Q4FZY0"/>
<dbReference type="PaxDb" id="10116-ENSRNOP00000018864"/>
<dbReference type="Ensembl" id="ENSRNOT00000018864.6">
    <property type="protein sequence ID" value="ENSRNOP00000018864.4"/>
    <property type="gene ID" value="ENSRNOG00000013783.6"/>
</dbReference>
<dbReference type="GeneID" id="298609"/>
<dbReference type="KEGG" id="rno:298609"/>
<dbReference type="UCSC" id="RGD:1307585">
    <property type="organism name" value="rat"/>
</dbReference>
<dbReference type="AGR" id="RGD:1307585"/>
<dbReference type="CTD" id="79180"/>
<dbReference type="RGD" id="1307585">
    <property type="gene designation" value="Efhd2"/>
</dbReference>
<dbReference type="eggNOG" id="KOG0041">
    <property type="taxonomic scope" value="Eukaryota"/>
</dbReference>
<dbReference type="GeneTree" id="ENSGT00390000012058"/>
<dbReference type="HOGENOM" id="CLU_094429_0_0_1"/>
<dbReference type="InParanoid" id="Q4FZY0"/>
<dbReference type="OMA" id="ERMFKQY"/>
<dbReference type="OrthoDB" id="6572480at2759"/>
<dbReference type="PhylomeDB" id="Q4FZY0"/>
<dbReference type="TreeFam" id="TF320736"/>
<dbReference type="Reactome" id="R-RNO-9013405">
    <property type="pathway name" value="RHOD GTPase cycle"/>
</dbReference>
<dbReference type="PRO" id="PR:Q4FZY0"/>
<dbReference type="Proteomes" id="UP000002494">
    <property type="component" value="Chromosome 5"/>
</dbReference>
<dbReference type="Bgee" id="ENSRNOG00000013783">
    <property type="expression patterns" value="Expressed in jejunum and 19 other cell types or tissues"/>
</dbReference>
<dbReference type="GO" id="GO:0045121">
    <property type="term" value="C:membrane raft"/>
    <property type="evidence" value="ECO:0007669"/>
    <property type="project" value="UniProtKB-SubCell"/>
</dbReference>
<dbReference type="GO" id="GO:0005509">
    <property type="term" value="F:calcium ion binding"/>
    <property type="evidence" value="ECO:0000266"/>
    <property type="project" value="RGD"/>
</dbReference>
<dbReference type="CDD" id="cd00051">
    <property type="entry name" value="EFh"/>
    <property type="match status" value="1"/>
</dbReference>
<dbReference type="FunFam" id="1.10.238.10:FF:000112">
    <property type="entry name" value="EF-hand domain family, member D2"/>
    <property type="match status" value="1"/>
</dbReference>
<dbReference type="Gene3D" id="1.10.238.10">
    <property type="entry name" value="EF-hand"/>
    <property type="match status" value="1"/>
</dbReference>
<dbReference type="InterPro" id="IPR049025">
    <property type="entry name" value="AIF-1_EF_pair"/>
</dbReference>
<dbReference type="InterPro" id="IPR011992">
    <property type="entry name" value="EF-hand-dom_pair"/>
</dbReference>
<dbReference type="InterPro" id="IPR002048">
    <property type="entry name" value="EF_hand_dom"/>
</dbReference>
<dbReference type="InterPro" id="IPR040365">
    <property type="entry name" value="EFHD1/2"/>
</dbReference>
<dbReference type="PANTHER" id="PTHR13025">
    <property type="entry name" value="EF-HAND DOMAIN-CONTAINING PROTEIN D"/>
    <property type="match status" value="1"/>
</dbReference>
<dbReference type="PANTHER" id="PTHR13025:SF2">
    <property type="entry name" value="EF-HAND DOMAIN-CONTAINING PROTEIN D2"/>
    <property type="match status" value="1"/>
</dbReference>
<dbReference type="Pfam" id="PF21008">
    <property type="entry name" value="AIF-1"/>
    <property type="match status" value="1"/>
</dbReference>
<dbReference type="SMART" id="SM00054">
    <property type="entry name" value="EFh"/>
    <property type="match status" value="2"/>
</dbReference>
<dbReference type="SUPFAM" id="SSF47473">
    <property type="entry name" value="EF-hand"/>
    <property type="match status" value="1"/>
</dbReference>
<dbReference type="PROSITE" id="PS50222">
    <property type="entry name" value="EF_HAND_2"/>
    <property type="match status" value="2"/>
</dbReference>
<accession>Q4FZY0</accession>
<evidence type="ECO:0000250" key="1"/>
<evidence type="ECO:0000250" key="2">
    <source>
        <dbReference type="UniProtKB" id="Q96C19"/>
    </source>
</evidence>
<evidence type="ECO:0000250" key="3">
    <source>
        <dbReference type="UniProtKB" id="Q9D8Y0"/>
    </source>
</evidence>
<evidence type="ECO:0000255" key="4">
    <source>
        <dbReference type="PROSITE-ProRule" id="PRU00448"/>
    </source>
</evidence>
<evidence type="ECO:0000256" key="5">
    <source>
        <dbReference type="SAM" id="MobiDB-lite"/>
    </source>
</evidence>
<evidence type="ECO:0000305" key="6"/>
<evidence type="ECO:0007744" key="7">
    <source>
    </source>
</evidence>
<reference key="1">
    <citation type="journal article" date="2004" name="Genome Res.">
        <title>The status, quality, and expansion of the NIH full-length cDNA project: the Mammalian Gene Collection (MGC).</title>
        <authorList>
            <consortium name="The MGC Project Team"/>
        </authorList>
    </citation>
    <scope>NUCLEOTIDE SEQUENCE [LARGE SCALE MRNA]</scope>
    <source>
        <tissue>Placenta</tissue>
    </source>
</reference>
<reference key="2">
    <citation type="submission" date="2007-04" db="UniProtKB">
        <authorList>
            <person name="Lubec G."/>
            <person name="Chen W.-Q."/>
        </authorList>
    </citation>
    <scope>PROTEIN SEQUENCE OF 123-133; 151-157; 159-187; 197-217 AND 233-239</scope>
    <scope>IDENTIFICATION BY MASS SPECTROMETRY</scope>
    <source>
        <strain>Sprague-Dawley</strain>
        <tissue>Hippocampus</tissue>
    </source>
</reference>
<reference key="3">
    <citation type="journal article" date="2012" name="Nat. Commun.">
        <title>Quantitative maps of protein phosphorylation sites across 14 different rat organs and tissues.</title>
        <authorList>
            <person name="Lundby A."/>
            <person name="Secher A."/>
            <person name="Lage K."/>
            <person name="Nordsborg N.B."/>
            <person name="Dmytriyev A."/>
            <person name="Lundby C."/>
            <person name="Olsen J.V."/>
        </authorList>
    </citation>
    <scope>PHOSPHORYLATION [LARGE SCALE ANALYSIS] AT SER-73</scope>
    <scope>IDENTIFICATION BY MASS SPECTROMETRY [LARGE SCALE ANALYSIS]</scope>
</reference>
<comment type="function">
    <text evidence="1">May regulate B-cell receptor (BCR)-induced immature and primary B-cell apoptosis. Plays a role as negative regulator of the canonical NF-kappa-B-activating branch. Controls spontaneous apoptosis through the regulation of BCL2L1 abundance.</text>
</comment>
<comment type="subunit">
    <text evidence="1">Interacts with CASP9; with inactive form.</text>
</comment>
<comment type="subcellular location">
    <subcellularLocation>
        <location evidence="1">Membrane raft</location>
    </subcellularLocation>
    <text evidence="1">In a mouse immature B-cell line WEHI-231.</text>
</comment>
<protein>
    <recommendedName>
        <fullName>EF-hand domain-containing protein D2</fullName>
    </recommendedName>
    <alternativeName>
        <fullName>Swiprosin-1</fullName>
    </alternativeName>
</protein>
<organism>
    <name type="scientific">Rattus norvegicus</name>
    <name type="common">Rat</name>
    <dbReference type="NCBI Taxonomy" id="10116"/>
    <lineage>
        <taxon>Eukaryota</taxon>
        <taxon>Metazoa</taxon>
        <taxon>Chordata</taxon>
        <taxon>Craniata</taxon>
        <taxon>Vertebrata</taxon>
        <taxon>Euteleostomi</taxon>
        <taxon>Mammalia</taxon>
        <taxon>Eutheria</taxon>
        <taxon>Euarchontoglires</taxon>
        <taxon>Glires</taxon>
        <taxon>Rodentia</taxon>
        <taxon>Myomorpha</taxon>
        <taxon>Muroidea</taxon>
        <taxon>Muridae</taxon>
        <taxon>Murinae</taxon>
        <taxon>Rattus</taxon>
    </lineage>
</organism>
<feature type="initiator methionine" description="Removed" evidence="2">
    <location>
        <position position="1"/>
    </location>
</feature>
<feature type="chain" id="PRO_0000287580" description="EF-hand domain-containing protein D2">
    <location>
        <begin position="2"/>
        <end position="239"/>
    </location>
</feature>
<feature type="domain" description="EF-hand 1" evidence="4">
    <location>
        <begin position="91"/>
        <end position="126"/>
    </location>
</feature>
<feature type="domain" description="EF-hand 2" evidence="4">
    <location>
        <begin position="127"/>
        <end position="162"/>
    </location>
</feature>
<feature type="region of interest" description="Disordered" evidence="5">
    <location>
        <begin position="1"/>
        <end position="51"/>
    </location>
</feature>
<feature type="compositionally biased region" description="Low complexity" evidence="5">
    <location>
        <begin position="32"/>
        <end position="46"/>
    </location>
</feature>
<feature type="binding site" evidence="6">
    <location>
        <position position="104"/>
    </location>
    <ligand>
        <name>Ca(2+)</name>
        <dbReference type="ChEBI" id="CHEBI:29108"/>
        <label>1</label>
    </ligand>
</feature>
<feature type="binding site" evidence="6">
    <location>
        <position position="108"/>
    </location>
    <ligand>
        <name>Ca(2+)</name>
        <dbReference type="ChEBI" id="CHEBI:29108"/>
        <label>1</label>
    </ligand>
</feature>
<feature type="binding site" evidence="6">
    <location>
        <position position="115"/>
    </location>
    <ligand>
        <name>Ca(2+)</name>
        <dbReference type="ChEBI" id="CHEBI:29108"/>
        <label>1</label>
    </ligand>
</feature>
<feature type="binding site" evidence="6">
    <location>
        <position position="140"/>
    </location>
    <ligand>
        <name>Ca(2+)</name>
        <dbReference type="ChEBI" id="CHEBI:29108"/>
        <label>2</label>
    </ligand>
</feature>
<feature type="binding site" evidence="6">
    <location>
        <position position="142"/>
    </location>
    <ligand>
        <name>Ca(2+)</name>
        <dbReference type="ChEBI" id="CHEBI:29108"/>
        <label>2</label>
    </ligand>
</feature>
<feature type="binding site" evidence="6">
    <location>
        <position position="144"/>
    </location>
    <ligand>
        <name>Ca(2+)</name>
        <dbReference type="ChEBI" id="CHEBI:29108"/>
        <label>2</label>
    </ligand>
</feature>
<feature type="binding site" evidence="6">
    <location>
        <position position="146"/>
    </location>
    <ligand>
        <name>Ca(2+)</name>
        <dbReference type="ChEBI" id="CHEBI:29108"/>
        <label>2</label>
    </ligand>
</feature>
<feature type="binding site" evidence="6">
    <location>
        <position position="151"/>
    </location>
    <ligand>
        <name>Ca(2+)</name>
        <dbReference type="ChEBI" id="CHEBI:29108"/>
        <label>2</label>
    </ligand>
</feature>
<feature type="modified residue" description="N-acetylalanine" evidence="2">
    <location>
        <position position="2"/>
    </location>
</feature>
<feature type="modified residue" description="Phosphoserine" evidence="2">
    <location>
        <position position="11"/>
    </location>
</feature>
<feature type="modified residue" description="Phosphoserine" evidence="7">
    <location>
        <position position="73"/>
    </location>
</feature>
<feature type="modified residue" description="Phosphoserine" evidence="2">
    <location>
        <position position="75"/>
    </location>
</feature>
<feature type="modified residue" description="Phosphotyrosine" evidence="3">
    <location>
        <position position="82"/>
    </location>
</feature>
<feature type="modified residue" description="N6-acetyllysine" evidence="2">
    <location>
        <position position="232"/>
    </location>
</feature>
<gene>
    <name type="primary">Efhd2</name>
    <name type="synonym">Sws1</name>
</gene>
<proteinExistence type="evidence at protein level"/>